<protein>
    <recommendedName>
        <fullName>Putative amidase AmiA2</fullName>
        <ecNumber>3.5.1.4</ecNumber>
    </recommendedName>
</protein>
<name>AMIA2_MYCTU</name>
<accession>P9WQ99</accession>
<accession>L0TCA9</accession>
<accession>O05835</accession>
<accession>P63490</accession>
<dbReference type="EC" id="3.5.1.4"/>
<dbReference type="EMBL" id="AL123456">
    <property type="protein sequence ID" value="CCP45151.1"/>
    <property type="molecule type" value="Genomic_DNA"/>
</dbReference>
<dbReference type="PIR" id="B70586">
    <property type="entry name" value="B70586"/>
</dbReference>
<dbReference type="RefSeq" id="NP_216879.1">
    <property type="nucleotide sequence ID" value="NC_000962.3"/>
</dbReference>
<dbReference type="RefSeq" id="WP_003412223.1">
    <property type="nucleotide sequence ID" value="NZ_NVQJ01000029.1"/>
</dbReference>
<dbReference type="SMR" id="P9WQ99"/>
<dbReference type="FunCoup" id="P9WQ99">
    <property type="interactions" value="112"/>
</dbReference>
<dbReference type="STRING" id="83332.Rv2363"/>
<dbReference type="PaxDb" id="83332-Rv2363"/>
<dbReference type="DNASU" id="888955"/>
<dbReference type="GeneID" id="888955"/>
<dbReference type="KEGG" id="mtu:Rv2363"/>
<dbReference type="KEGG" id="mtv:RVBD_2363"/>
<dbReference type="TubercuList" id="Rv2363"/>
<dbReference type="eggNOG" id="COG0154">
    <property type="taxonomic scope" value="Bacteria"/>
</dbReference>
<dbReference type="InParanoid" id="P9WQ99"/>
<dbReference type="OrthoDB" id="5175573at2"/>
<dbReference type="PhylomeDB" id="P9WQ99"/>
<dbReference type="Proteomes" id="UP000001584">
    <property type="component" value="Chromosome"/>
</dbReference>
<dbReference type="GO" id="GO:0004040">
    <property type="term" value="F:amidase activity"/>
    <property type="evidence" value="ECO:0007669"/>
    <property type="project" value="UniProtKB-EC"/>
</dbReference>
<dbReference type="Gene3D" id="3.90.1300.10">
    <property type="entry name" value="Amidase signature (AS) domain"/>
    <property type="match status" value="1"/>
</dbReference>
<dbReference type="InterPro" id="IPR000120">
    <property type="entry name" value="Amidase"/>
</dbReference>
<dbReference type="InterPro" id="IPR020556">
    <property type="entry name" value="Amidase_CS"/>
</dbReference>
<dbReference type="InterPro" id="IPR023631">
    <property type="entry name" value="Amidase_dom"/>
</dbReference>
<dbReference type="InterPro" id="IPR036928">
    <property type="entry name" value="AS_sf"/>
</dbReference>
<dbReference type="NCBIfam" id="NF004717">
    <property type="entry name" value="PRK06061.1"/>
    <property type="match status" value="1"/>
</dbReference>
<dbReference type="PANTHER" id="PTHR11895:SF7">
    <property type="entry name" value="GLUTAMYL-TRNA(GLN) AMIDOTRANSFERASE SUBUNIT A, MITOCHONDRIAL"/>
    <property type="match status" value="1"/>
</dbReference>
<dbReference type="PANTHER" id="PTHR11895">
    <property type="entry name" value="TRANSAMIDASE"/>
    <property type="match status" value="1"/>
</dbReference>
<dbReference type="Pfam" id="PF01425">
    <property type="entry name" value="Amidase"/>
    <property type="match status" value="1"/>
</dbReference>
<dbReference type="SUPFAM" id="SSF75304">
    <property type="entry name" value="Amidase signature (AS) enzymes"/>
    <property type="match status" value="1"/>
</dbReference>
<dbReference type="PROSITE" id="PS00571">
    <property type="entry name" value="AMIDASES"/>
    <property type="match status" value="1"/>
</dbReference>
<reference key="1">
    <citation type="journal article" date="1998" name="Nature">
        <title>Deciphering the biology of Mycobacterium tuberculosis from the complete genome sequence.</title>
        <authorList>
            <person name="Cole S.T."/>
            <person name="Brosch R."/>
            <person name="Parkhill J."/>
            <person name="Garnier T."/>
            <person name="Churcher C.M."/>
            <person name="Harris D.E."/>
            <person name="Gordon S.V."/>
            <person name="Eiglmeier K."/>
            <person name="Gas S."/>
            <person name="Barry C.E. III"/>
            <person name="Tekaia F."/>
            <person name="Badcock K."/>
            <person name="Basham D."/>
            <person name="Brown D."/>
            <person name="Chillingworth T."/>
            <person name="Connor R."/>
            <person name="Davies R.M."/>
            <person name="Devlin K."/>
            <person name="Feltwell T."/>
            <person name="Gentles S."/>
            <person name="Hamlin N."/>
            <person name="Holroyd S."/>
            <person name="Hornsby T."/>
            <person name="Jagels K."/>
            <person name="Krogh A."/>
            <person name="McLean J."/>
            <person name="Moule S."/>
            <person name="Murphy L.D."/>
            <person name="Oliver S."/>
            <person name="Osborne J."/>
            <person name="Quail M.A."/>
            <person name="Rajandream M.A."/>
            <person name="Rogers J."/>
            <person name="Rutter S."/>
            <person name="Seeger K."/>
            <person name="Skelton S."/>
            <person name="Squares S."/>
            <person name="Squares R."/>
            <person name="Sulston J.E."/>
            <person name="Taylor K."/>
            <person name="Whitehead S."/>
            <person name="Barrell B.G."/>
        </authorList>
    </citation>
    <scope>NUCLEOTIDE SEQUENCE [LARGE SCALE GENOMIC DNA]</scope>
    <source>
        <strain>ATCC 25618 / H37Rv</strain>
    </source>
</reference>
<reference key="2">
    <citation type="journal article" date="2011" name="Mol. Cell. Proteomics">
        <title>Proteogenomic analysis of Mycobacterium tuberculosis by high resolution mass spectrometry.</title>
        <authorList>
            <person name="Kelkar D.S."/>
            <person name="Kumar D."/>
            <person name="Kumar P."/>
            <person name="Balakrishnan L."/>
            <person name="Muthusamy B."/>
            <person name="Yadav A.K."/>
            <person name="Shrivastava P."/>
            <person name="Marimuthu A."/>
            <person name="Anand S."/>
            <person name="Sundaram H."/>
            <person name="Kingsbury R."/>
            <person name="Harsha H.C."/>
            <person name="Nair B."/>
            <person name="Prasad T.S."/>
            <person name="Chauhan D.S."/>
            <person name="Katoch K."/>
            <person name="Katoch V.M."/>
            <person name="Kumar P."/>
            <person name="Chaerkady R."/>
            <person name="Ramachandran S."/>
            <person name="Dash D."/>
            <person name="Pandey A."/>
        </authorList>
    </citation>
    <scope>IDENTIFICATION BY MASS SPECTROMETRY [LARGE SCALE ANALYSIS]</scope>
    <source>
        <strain>ATCC 25618 / H37Rv</strain>
    </source>
</reference>
<proteinExistence type="evidence at protein level"/>
<sequence>MVGASGSDAGAISGSGNQRLPTLTDLLYQLATRAVTSEELVRRSLRAIDVSQPTLNAFRVVLTESALADAAAADKRRAAGDTAPLLGIPIAVKDDVDVAGVPTAFGTQGYVAPATDDCEVVRRLKAAGAVIVGKTNTCELGQWPFTSGPGFGHTRNPWSRRHTPGGSSGGSAAAVAAGLVTAAIGSDGAGSIRIPAAWTHLVGIKPQRGRISTWPLPEAFNGVTVNGVLARTVEDAALVLDAASGNVEGDRHQPPPVTVSDFVGIAPGPLKIALSTHFPYTGFRAKLHPEILAATQRVGDQLELLGHTVVKGNPDYGLRLSWNFLARSTAGLWEWAERLGDEVTLDRRTVSNLRMGHVLSQAILRSARRHEAADQRRVGSIFDIVDVVLAPTTAQPPPMARAFDRLGSFGTDRAIIAACPSTWPWNLLGWPSINVPAGFTSDGLPIGVQLMGPANSEGMLISLAAELEAVSGWATKQPQVWWTS</sequence>
<comment type="catalytic activity">
    <reaction>
        <text>a monocarboxylic acid amide + H2O = a monocarboxylate + NH4(+)</text>
        <dbReference type="Rhea" id="RHEA:12020"/>
        <dbReference type="ChEBI" id="CHEBI:15377"/>
        <dbReference type="ChEBI" id="CHEBI:28938"/>
        <dbReference type="ChEBI" id="CHEBI:35757"/>
        <dbReference type="ChEBI" id="CHEBI:83628"/>
        <dbReference type="EC" id="3.5.1.4"/>
    </reaction>
</comment>
<comment type="similarity">
    <text evidence="2">Belongs to the amidase family.</text>
</comment>
<organism>
    <name type="scientific">Mycobacterium tuberculosis (strain ATCC 25618 / H37Rv)</name>
    <dbReference type="NCBI Taxonomy" id="83332"/>
    <lineage>
        <taxon>Bacteria</taxon>
        <taxon>Bacillati</taxon>
        <taxon>Actinomycetota</taxon>
        <taxon>Actinomycetes</taxon>
        <taxon>Mycobacteriales</taxon>
        <taxon>Mycobacteriaceae</taxon>
        <taxon>Mycobacterium</taxon>
        <taxon>Mycobacterium tuberculosis complex</taxon>
    </lineage>
</organism>
<gene>
    <name type="primary">amiA2</name>
    <name type="ordered locus">Rv2363</name>
    <name type="ORF">MTCY27.17c</name>
</gene>
<evidence type="ECO:0000250" key="1"/>
<evidence type="ECO:0000305" key="2"/>
<feature type="chain" id="PRO_0000105253" description="Putative amidase AmiA2">
    <location>
        <begin position="1"/>
        <end position="484"/>
    </location>
</feature>
<feature type="active site" description="Charge relay system" evidence="1">
    <location>
        <position position="93"/>
    </location>
</feature>
<feature type="active site" description="Charge relay system" evidence="1">
    <location>
        <position position="167"/>
    </location>
</feature>
<feature type="active site" description="Acyl-ester intermediate" evidence="1">
    <location>
        <position position="191"/>
    </location>
</feature>
<keyword id="KW-0378">Hydrolase</keyword>
<keyword id="KW-1185">Reference proteome</keyword>